<comment type="function">
    <text>This is a seed storage protein.</text>
</comment>
<comment type="subunit">
    <text>Hexamer; each subunit is composed of an acidic and a basic chain derived from a single precursor and linked by a disulfide bond.</text>
</comment>
<comment type="similarity">
    <text evidence="6">Belongs to the 11S seed storage protein (globulins) family.</text>
</comment>
<gene>
    <name type="primary">CRURS</name>
</gene>
<name>CRU1_RAPSA</name>
<evidence type="ECO:0000250" key="1"/>
<evidence type="ECO:0000250" key="2">
    <source>
        <dbReference type="UniProtKB" id="P15455"/>
    </source>
</evidence>
<evidence type="ECO:0000250" key="3">
    <source>
        <dbReference type="UniProtKB" id="P15456"/>
    </source>
</evidence>
<evidence type="ECO:0000255" key="4"/>
<evidence type="ECO:0000256" key="5">
    <source>
        <dbReference type="SAM" id="MobiDB-lite"/>
    </source>
</evidence>
<evidence type="ECO:0000305" key="6"/>
<reference key="1">
    <citation type="journal article" date="1992" name="Plant Mol. Biol.">
        <title>The cruciferin gene family in radish.</title>
        <authorList>
            <person name="Depigny-This D."/>
            <person name="Raynal M."/>
            <person name="Aspart L."/>
            <person name="Delseny M."/>
            <person name="Grellet F."/>
        </authorList>
    </citation>
    <scope>NUCLEOTIDE SEQUENCE [GENOMIC DNA]</scope>
    <source>
        <strain>cv. Saxa Knacker</strain>
    </source>
</reference>
<protein>
    <recommendedName>
        <fullName>Cruciferin PGCRURSE5</fullName>
    </recommendedName>
    <alternativeName>
        <fullName>11S globulin</fullName>
    </alternativeName>
    <alternativeName>
        <fullName>12S storage protein</fullName>
    </alternativeName>
    <component>
        <recommendedName>
            <fullName>Cruciferin PGCRURSE5 alpha chain</fullName>
        </recommendedName>
    </component>
    <component>
        <recommendedName>
            <fullName>Cruciferin PGCRURSE5 beta chain</fullName>
        </recommendedName>
    </component>
</protein>
<feature type="signal peptide" evidence="1">
    <location>
        <begin position="1"/>
        <end position="23"/>
    </location>
</feature>
<feature type="chain" id="PRO_0000032040" description="Cruciferin PGCRURSE5 alpha chain">
    <location>
        <begin position="24"/>
        <end position="289"/>
    </location>
</feature>
<feature type="chain" id="PRO_0000032041" description="Cruciferin PGCRURSE5 beta chain">
    <location>
        <begin position="290"/>
        <end position="479"/>
    </location>
</feature>
<feature type="domain" description="Cupin type-1 1" evidence="4">
    <location>
        <begin position="42"/>
        <end position="241"/>
    </location>
</feature>
<feature type="domain" description="Cupin type-1 2" evidence="4">
    <location>
        <begin position="302"/>
        <end position="451"/>
    </location>
</feature>
<feature type="region of interest" description="Disordered" evidence="5">
    <location>
        <begin position="117"/>
        <end position="144"/>
    </location>
</feature>
<feature type="region of interest" description="Disordered" evidence="5">
    <location>
        <begin position="196"/>
        <end position="219"/>
    </location>
</feature>
<feature type="region of interest" description="Disordered" evidence="5">
    <location>
        <begin position="271"/>
        <end position="291"/>
    </location>
</feature>
<feature type="compositionally biased region" description="Low complexity" evidence="5">
    <location>
        <begin position="124"/>
        <end position="141"/>
    </location>
</feature>
<feature type="modified residue" description="Phosphothreonine" evidence="2">
    <location>
        <position position="116"/>
    </location>
</feature>
<feature type="modified residue" description="Phosphothreonine" evidence="3">
    <location>
        <position position="415"/>
    </location>
</feature>
<feature type="modified residue" description="Phosphothreonine" evidence="3">
    <location>
        <position position="440"/>
    </location>
</feature>
<feature type="disulfide bond" evidence="1">
    <location>
        <begin position="37"/>
        <end position="70"/>
    </location>
</feature>
<feature type="disulfide bond" description="Interchain (between alpha and beta chains)" evidence="4">
    <location>
        <begin position="113"/>
        <end position="296"/>
    </location>
</feature>
<organism>
    <name type="scientific">Raphanus sativus</name>
    <name type="common">Radish</name>
    <name type="synonym">Raphanus raphanistrum var. sativus</name>
    <dbReference type="NCBI Taxonomy" id="3726"/>
    <lineage>
        <taxon>Eukaryota</taxon>
        <taxon>Viridiplantae</taxon>
        <taxon>Streptophyta</taxon>
        <taxon>Embryophyta</taxon>
        <taxon>Tracheophyta</taxon>
        <taxon>Spermatophyta</taxon>
        <taxon>Magnoliopsida</taxon>
        <taxon>eudicotyledons</taxon>
        <taxon>Gunneridae</taxon>
        <taxon>Pentapetalae</taxon>
        <taxon>rosids</taxon>
        <taxon>malvids</taxon>
        <taxon>Brassicales</taxon>
        <taxon>Brassicaceae</taxon>
        <taxon>Brassiceae</taxon>
        <taxon>Raphanus</taxon>
    </lineage>
</organism>
<dbReference type="EMBL" id="X59808">
    <property type="protein sequence ID" value="CAA42478.1"/>
    <property type="molecule type" value="Genomic_DNA"/>
</dbReference>
<dbReference type="PIR" id="S26223">
    <property type="entry name" value="S26223"/>
</dbReference>
<dbReference type="SMR" id="Q02498"/>
<dbReference type="Proteomes" id="UP000504610">
    <property type="component" value="Unplaced"/>
</dbReference>
<dbReference type="GO" id="GO:0045735">
    <property type="term" value="F:nutrient reservoir activity"/>
    <property type="evidence" value="ECO:0007669"/>
    <property type="project" value="UniProtKB-KW"/>
</dbReference>
<dbReference type="GO" id="GO:0010431">
    <property type="term" value="P:seed maturation"/>
    <property type="evidence" value="ECO:0007669"/>
    <property type="project" value="UniProtKB-ARBA"/>
</dbReference>
<dbReference type="CDD" id="cd02243">
    <property type="entry name" value="cupin_11S_legumin_C"/>
    <property type="match status" value="1"/>
</dbReference>
<dbReference type="CDD" id="cd02242">
    <property type="entry name" value="cupin_11S_legumin_N"/>
    <property type="match status" value="1"/>
</dbReference>
<dbReference type="FunFam" id="2.60.120.10:FF:000073">
    <property type="entry name" value="Glycinin G1"/>
    <property type="match status" value="1"/>
</dbReference>
<dbReference type="FunFam" id="2.60.120.10:FF:000439">
    <property type="entry name" value="Seed storage protein"/>
    <property type="match status" value="1"/>
</dbReference>
<dbReference type="Gene3D" id="2.60.120.10">
    <property type="entry name" value="Jelly Rolls"/>
    <property type="match status" value="2"/>
</dbReference>
<dbReference type="InterPro" id="IPR022379">
    <property type="entry name" value="11S_seedstore_CS"/>
</dbReference>
<dbReference type="InterPro" id="IPR006044">
    <property type="entry name" value="11S_seedstore_pln"/>
</dbReference>
<dbReference type="InterPro" id="IPR006045">
    <property type="entry name" value="Cupin_1"/>
</dbReference>
<dbReference type="InterPro" id="IPR014710">
    <property type="entry name" value="RmlC-like_jellyroll"/>
</dbReference>
<dbReference type="InterPro" id="IPR011051">
    <property type="entry name" value="RmlC_Cupin_sf"/>
</dbReference>
<dbReference type="InterPro" id="IPR050253">
    <property type="entry name" value="Seed_Storage-Functional"/>
</dbReference>
<dbReference type="PANTHER" id="PTHR31189:SF74">
    <property type="entry name" value="12S SEED STORAGE PROTEIN CRC"/>
    <property type="match status" value="1"/>
</dbReference>
<dbReference type="PANTHER" id="PTHR31189">
    <property type="entry name" value="OS03G0336100 PROTEIN-RELATED"/>
    <property type="match status" value="1"/>
</dbReference>
<dbReference type="Pfam" id="PF00190">
    <property type="entry name" value="Cupin_1"/>
    <property type="match status" value="2"/>
</dbReference>
<dbReference type="PRINTS" id="PR00439">
    <property type="entry name" value="11SGLOBULIN"/>
</dbReference>
<dbReference type="SMART" id="SM00835">
    <property type="entry name" value="Cupin_1"/>
    <property type="match status" value="2"/>
</dbReference>
<dbReference type="SUPFAM" id="SSF51182">
    <property type="entry name" value="RmlC-like cupins"/>
    <property type="match status" value="1"/>
</dbReference>
<dbReference type="PROSITE" id="PS00305">
    <property type="entry name" value="11S_SEED_STORAGE"/>
    <property type="match status" value="1"/>
</dbReference>
<keyword id="KW-1015">Disulfide bond</keyword>
<keyword id="KW-0597">Phosphoprotein</keyword>
<keyword id="KW-1185">Reference proteome</keyword>
<keyword id="KW-0708">Seed storage protein</keyword>
<keyword id="KW-0732">Signal</keyword>
<keyword id="KW-0758">Storage protein</keyword>
<accession>Q02498</accession>
<sequence length="479" mass="53256">MVKLAHLLVATFGVLLVLNGCLARQSLGVPPQLGNACNLDNLDVLQPTETIKSEAGRLEYWDHNHPQLRCAGVSVSRLIIEQGGLYLPTFFSSPKIAYVVQGMGISGRVVPGCAETFMDSQPMQGQGQQGQQGQQGQQQQGFRDMHQKVEHVRHGDVIAITAGSAHWIYNTGDQPLVIVCLLDIANYQNQLDRNPRTFRLAGNNPQGGSHQQQQQQQQNMLSGFDPQVLAQALKMQLRLAQELQNQQDNRGNIVRVKGPFQVVRPPLRQQYESEQWRHPRGPPQSPQDNGLEETICSMRTHENIDDPARADVYKPNLGRVTSVNSYTLPILQYIRLSATRGILQGNAMVLPKYNMNANEILYCTQGQARIQVVNDNGQNVLDQQVQKGQLVVIPQGFAYVVQSHGNNFEWISFKTNANAMVSTLAGRTSALRALPLEVITNAFQISLEEARRIKFNTPETTLTHARGGQPQLIEEIVEA</sequence>
<proteinExistence type="inferred from homology"/>